<evidence type="ECO:0000250" key="1"/>
<evidence type="ECO:0000255" key="2"/>
<evidence type="ECO:0000255" key="3">
    <source>
        <dbReference type="PROSITE-ProRule" id="PRU00274"/>
    </source>
</evidence>
<evidence type="ECO:0000269" key="4">
    <source>
    </source>
</evidence>
<evidence type="ECO:0000269" key="5">
    <source>
    </source>
</evidence>
<evidence type="ECO:0000305" key="6"/>
<evidence type="ECO:0000305" key="7">
    <source>
    </source>
</evidence>
<organism>
    <name type="scientific">Crotalus durissus terrificus</name>
    <name type="common">South American rattlesnake</name>
    <dbReference type="NCBI Taxonomy" id="8732"/>
    <lineage>
        <taxon>Eukaryota</taxon>
        <taxon>Metazoa</taxon>
        <taxon>Chordata</taxon>
        <taxon>Craniata</taxon>
        <taxon>Vertebrata</taxon>
        <taxon>Euteleostomi</taxon>
        <taxon>Lepidosauria</taxon>
        <taxon>Squamata</taxon>
        <taxon>Bifurcata</taxon>
        <taxon>Unidentata</taxon>
        <taxon>Episquamata</taxon>
        <taxon>Toxicofera</taxon>
        <taxon>Serpentes</taxon>
        <taxon>Colubroidea</taxon>
        <taxon>Viperidae</taxon>
        <taxon>Crotalinae</taxon>
        <taxon>Crotalus</taxon>
    </lineage>
</organism>
<sequence length="262" mass="29262">MVLIRVLANLLILQLSYAQKSSELVIGGDECNINEHNFLVALYEYWSQSFLCGGTLINGEWVLTAAHCDRTHFLIYVGVHDRSVQFDKEQRRFPKEKYFFNCGNNFTKWDKDIMLIRLNKPVRNNEHIAPLSLPSSPPSVGSVCRVMGWGQTTSPQNTLPDVPHCANINLLDYEVCRTALPQLRLPATSRILCAGVLEGGIDTCNRDSGGPLICNGEFQGIVFWGPDPCAQPDKPALYSKVFDHLDWIQSIIAGNTIVNCPP</sequence>
<dbReference type="EC" id="3.4.21.-"/>
<dbReference type="EMBL" id="EU360952">
    <property type="protein sequence ID" value="ABY65930.1"/>
    <property type="molecule type" value="mRNA"/>
</dbReference>
<dbReference type="SMR" id="B0FXM2"/>
<dbReference type="MEROPS" id="S01.181"/>
<dbReference type="GO" id="GO:0005576">
    <property type="term" value="C:extracellular region"/>
    <property type="evidence" value="ECO:0007669"/>
    <property type="project" value="UniProtKB-SubCell"/>
</dbReference>
<dbReference type="GO" id="GO:0030141">
    <property type="term" value="C:secretory granule"/>
    <property type="evidence" value="ECO:0007669"/>
    <property type="project" value="TreeGrafter"/>
</dbReference>
<dbReference type="GO" id="GO:0004252">
    <property type="term" value="F:serine-type endopeptidase activity"/>
    <property type="evidence" value="ECO:0007669"/>
    <property type="project" value="InterPro"/>
</dbReference>
<dbReference type="GO" id="GO:0090729">
    <property type="term" value="F:toxin activity"/>
    <property type="evidence" value="ECO:0007669"/>
    <property type="project" value="UniProtKB-KW"/>
</dbReference>
<dbReference type="GO" id="GO:0006508">
    <property type="term" value="P:proteolysis"/>
    <property type="evidence" value="ECO:0007669"/>
    <property type="project" value="UniProtKB-KW"/>
</dbReference>
<dbReference type="CDD" id="cd00190">
    <property type="entry name" value="Tryp_SPc"/>
    <property type="match status" value="1"/>
</dbReference>
<dbReference type="FunFam" id="2.40.10.10:FF:000158">
    <property type="entry name" value="Thrombin-like enzyme saxthrombin"/>
    <property type="match status" value="1"/>
</dbReference>
<dbReference type="Gene3D" id="2.40.10.10">
    <property type="entry name" value="Trypsin-like serine proteases"/>
    <property type="match status" value="2"/>
</dbReference>
<dbReference type="InterPro" id="IPR009003">
    <property type="entry name" value="Peptidase_S1_PA"/>
</dbReference>
<dbReference type="InterPro" id="IPR043504">
    <property type="entry name" value="Peptidase_S1_PA_chymotrypsin"/>
</dbReference>
<dbReference type="InterPro" id="IPR001314">
    <property type="entry name" value="Peptidase_S1A"/>
</dbReference>
<dbReference type="InterPro" id="IPR001254">
    <property type="entry name" value="Trypsin_dom"/>
</dbReference>
<dbReference type="InterPro" id="IPR018114">
    <property type="entry name" value="TRYPSIN_HIS"/>
</dbReference>
<dbReference type="PANTHER" id="PTHR24271:SF47">
    <property type="entry name" value="KALLIKREIN-1"/>
    <property type="match status" value="1"/>
</dbReference>
<dbReference type="PANTHER" id="PTHR24271">
    <property type="entry name" value="KALLIKREIN-RELATED"/>
    <property type="match status" value="1"/>
</dbReference>
<dbReference type="Pfam" id="PF00089">
    <property type="entry name" value="Trypsin"/>
    <property type="match status" value="1"/>
</dbReference>
<dbReference type="PRINTS" id="PR00722">
    <property type="entry name" value="CHYMOTRYPSIN"/>
</dbReference>
<dbReference type="SMART" id="SM00020">
    <property type="entry name" value="Tryp_SPc"/>
    <property type="match status" value="1"/>
</dbReference>
<dbReference type="SUPFAM" id="SSF50494">
    <property type="entry name" value="Trypsin-like serine proteases"/>
    <property type="match status" value="1"/>
</dbReference>
<dbReference type="PROSITE" id="PS50240">
    <property type="entry name" value="TRYPSIN_DOM"/>
    <property type="match status" value="1"/>
</dbReference>
<dbReference type="PROSITE" id="PS00134">
    <property type="entry name" value="TRYPSIN_HIS"/>
    <property type="match status" value="1"/>
</dbReference>
<accession>B0FXM2</accession>
<protein>
    <recommendedName>
        <fullName>Thrombin-like enzyme gyroxin B1.4</fullName>
        <shortName>SVTLE gyroxin B1.4</shortName>
        <ecNumber>3.4.21.-</ecNumber>
    </recommendedName>
    <alternativeName>
        <fullName>Fibrinogen-clotting enzyme</fullName>
    </alternativeName>
    <alternativeName>
        <fullName>Snake venom serine protease</fullName>
        <shortName>SVSP</shortName>
    </alternativeName>
</protein>
<reference key="1">
    <citation type="journal article" date="2009" name="Toxicon">
        <title>Cloning of serine protease cDNAs from Crotalus durissus terrificus venom gland and expression of a functional Gyroxin homologue in COS-7 cells.</title>
        <authorList>
            <person name="Yonamine C.M."/>
            <person name="Prieto-da-Silva A.R."/>
            <person name="Magalhaes G.S."/>
            <person name="Radis-Baptista G."/>
            <person name="Morganti L."/>
            <person name="Ambiel F.C."/>
            <person name="Chura-Chambi R.M."/>
            <person name="Yamane T."/>
            <person name="Camillo M.A."/>
        </authorList>
    </citation>
    <scope>NUCLEOTIDE SEQUENCE [MRNA]</scope>
    <source>
        <tissue>Venom gland</tissue>
    </source>
</reference>
<reference key="2">
    <citation type="journal article" date="2001" name="Toxicon">
        <title>Gyroxin fails to modify in vitro release of labelled dopamine and acetylcholine from rat and mouse striatal tissue.</title>
        <authorList>
            <person name="Camillo M.A."/>
            <person name="Arruda Paes P.C."/>
            <person name="Troncone L.R."/>
            <person name="Rogero J.R."/>
        </authorList>
    </citation>
    <scope>FUNCTION</scope>
</reference>
<reference key="3">
    <citation type="journal article" date="2011" name="Toxicon">
        <title>Gyroxin increases blood-brain barrier permeability to Evans blue dye in mice.</title>
        <authorList>
            <person name="Alves da Silva J.A."/>
            <person name="Oliveira K.C."/>
            <person name="Camillo M.A."/>
        </authorList>
    </citation>
    <scope>FUNCTION</scope>
</reference>
<keyword id="KW-1204">Blood coagulation cascade activating toxin</keyword>
<keyword id="KW-1015">Disulfide bond</keyword>
<keyword id="KW-0325">Glycoprotein</keyword>
<keyword id="KW-1199">Hemostasis impairing toxin</keyword>
<keyword id="KW-0378">Hydrolase</keyword>
<keyword id="KW-0645">Protease</keyword>
<keyword id="KW-0964">Secreted</keyword>
<keyword id="KW-0720">Serine protease</keyword>
<keyword id="KW-0732">Signal</keyword>
<keyword id="KW-0800">Toxin</keyword>
<proteinExistence type="evidence at transcript level"/>
<comment type="function">
    <text evidence="1 4 5">Thrombin-like snake venom serine protease. Displays a specificity similar to trypsin. Releases only fibrinopeptide A in the conversion of fibrinogen to fibrin. Shows coagulant, esterase and amidase activities (By similarity). Reversibly increases the permeability of the blood brain barrier (BBB) in mice. Induces the barrel rotation syndrome in mice, which is manifested by gyroxin-like, rapid rolling motions. This syndrome may be due to its effect on BBB permeability, and certainly also to other actions affecting endogenous substrates present in the endothelium, nervous tissues or blood.</text>
</comment>
<comment type="subunit">
    <text evidence="1">Monomer.</text>
</comment>
<comment type="subcellular location">
    <subcellularLocation>
        <location>Secreted</location>
    </subcellularLocation>
</comment>
<comment type="tissue specificity">
    <text>Expressed by the venom gland.</text>
</comment>
<comment type="miscellaneous">
    <text evidence="7">Negative results: does not have phospholipase activity, does not aggregate platelet, and does not affect the release of the neurotransmitters dopamine and acetylcholine in the nervous system.</text>
</comment>
<comment type="similarity">
    <text evidence="3">Belongs to the peptidase S1 family. Snake venom subfamily.</text>
</comment>
<comment type="caution">
    <text evidence="6">Information taken from PubMed:20637222 and PubMed:11137545 are not linked to a specific sequence. Hence, it is not sure whether the function corresponds to this protein or to a paralog.</text>
</comment>
<name>VSP14_CRODU</name>
<feature type="signal peptide" evidence="2">
    <location>
        <begin position="1"/>
        <end position="18"/>
    </location>
</feature>
<feature type="propeptide" id="PRO_5000301406" evidence="1">
    <location>
        <begin position="19"/>
        <end position="262"/>
    </location>
</feature>
<feature type="chain" id="PRO_5000301407" description="Thrombin-like enzyme gyroxin B1.4">
    <location>
        <begin position="25"/>
        <end position="262"/>
    </location>
</feature>
<feature type="domain" description="Peptidase S1" evidence="3">
    <location>
        <begin position="25"/>
        <end position="253"/>
    </location>
</feature>
<feature type="active site" description="Charge relay system" evidence="1">
    <location>
        <position position="67"/>
    </location>
</feature>
<feature type="active site" description="Charge relay system" evidence="1">
    <location>
        <position position="112"/>
    </location>
</feature>
<feature type="active site" description="Charge relay system" evidence="1">
    <location>
        <position position="208"/>
    </location>
</feature>
<feature type="glycosylation site" description="N-linked (GlcNAc...) asparagine" evidence="2">
    <location>
        <position position="105"/>
    </location>
</feature>
<feature type="disulfide bond" evidence="3">
    <location>
        <begin position="31"/>
        <end position="165"/>
    </location>
</feature>
<feature type="disulfide bond" evidence="3">
    <location>
        <begin position="52"/>
        <end position="68"/>
    </location>
</feature>
<feature type="disulfide bond" evidence="3">
    <location>
        <begin position="102"/>
        <end position="260"/>
    </location>
</feature>
<feature type="disulfide bond" evidence="3">
    <location>
        <begin position="144"/>
        <end position="214"/>
    </location>
</feature>
<feature type="disulfide bond" evidence="3">
    <location>
        <begin position="176"/>
        <end position="193"/>
    </location>
</feature>
<feature type="disulfide bond" evidence="3">
    <location>
        <begin position="204"/>
        <end position="229"/>
    </location>
</feature>